<accession>Q08014</accession>
<name>MEDB_GIAIN</name>
<reference key="1">
    <citation type="journal article" date="1993" name="J. Mol. Biol.">
        <title>Sequence and structure of a new coiled coil protein from a microtubule bundle in Giardia.</title>
        <authorList>
            <person name="Marshall J."/>
            <person name="Holberton D.V."/>
        </authorList>
    </citation>
    <scope>NUCLEOTIDE SEQUENCE [MRNA]</scope>
    <scope>FUNCTION</scope>
    <scope>SUBCELLULAR LOCATION</scope>
    <scope>DOMAIN</scope>
    <source>
        <strain>Portland-1</strain>
    </source>
</reference>
<sequence length="857" mass="100584">MSEAMVFSKIDEYTLFMSRSLQKSLKTFAEQVMALIYQYKDTLVEDRLALTNTLDEAVQILVDSGKEEADKLGFNIYSAVSRYISEIWASQSGQTTAAPPATDIDGLHRQLVALKNSLGQNAELYEQRCQLQAELRELQEFSENPAAAVEEIMQLKAQIDELKYGASNHNALVQEKRDLERHLADLRLSRQDTNSRLPQEIDRLRAEIEDEKRNLPHMDDLQRQRDELQRQLDTIRRRGNTSGVMAEIENIQRQIDDANSSASSEHELRMLRAEVETLRAQKSIVTRLEAENADLRRELQDIRGRAQEMSASQRYSANQAQELQEKAMQAEELLQQKIELRRQLHEALERADAGEAALRDKRRLEDEIKGLQLRLTENDFTKERSILRNEIQAKTTEIDTLISDRRALETKLLNKEAEVDQLLYEKQLLKTELNSYRGTNEDIDKLTFEKRQLVEELNDLREKTIKYDQLAREKAALETELKENSYNFDQLLEQKQQMRSDLNALREKAADYERVDRELRLKDKELEEKNAEIERLLEDRRVMRTELLHSKESATDVDSLIQEKRLRDRELAHLRDRMSEYERVVEERIQKEKENNLLKQRITELEQQQRTATVRETEMSALREKANELDGYNRERQAREHEINMLRDKALESDKLRQDNRVMAMELTELREKVQLLEKLQYEKRARDVEMLELRHKAMDVDTLVEEKQRLEMRLAELKIKVNNYDQLADDKARLQEQLKEMSDKLIEFEMIMDDNRRLKLQVKELDLKTANMEKLYEEYKKLEDQLKATKAMTSTGMGVSAASPAFYKTKSMRLTQQNNQMKNTTDNLLTRDIPKLIDKLIERPAGTTTMGRSGKF</sequence>
<organism>
    <name type="scientific">Giardia intestinalis</name>
    <name type="common">Giardia lamblia</name>
    <dbReference type="NCBI Taxonomy" id="5741"/>
    <lineage>
        <taxon>Eukaryota</taxon>
        <taxon>Metamonada</taxon>
        <taxon>Diplomonadida</taxon>
        <taxon>Hexamitidae</taxon>
        <taxon>Giardiinae</taxon>
        <taxon>Giardia</taxon>
    </lineage>
</organism>
<feature type="chain" id="PRO_0000096398" description="Median body protein">
    <location>
        <begin position="1"/>
        <end position="857"/>
    </location>
</feature>
<feature type="coiled-coil region" evidence="2">
    <location>
        <begin position="120"/>
        <end position="796"/>
    </location>
</feature>
<evidence type="ECO:0000250" key="1">
    <source>
        <dbReference type="UniProtKB" id="A8BER9"/>
    </source>
</evidence>
<evidence type="ECO:0000255" key="2"/>
<evidence type="ECO:0000269" key="3">
    <source>
    </source>
</evidence>
<evidence type="ECO:0000303" key="4">
    <source>
    </source>
</evidence>
<evidence type="ECO:0000305" key="5"/>
<evidence type="ECO:0000305" key="6">
    <source>
    </source>
</evidence>
<proteinExistence type="evidence at transcript level"/>
<dbReference type="EMBL" id="X64517">
    <property type="protein sequence ID" value="CAA45820.1"/>
    <property type="molecule type" value="mRNA"/>
</dbReference>
<dbReference type="PIR" id="S33821">
    <property type="entry name" value="S33821"/>
</dbReference>
<dbReference type="RefSeq" id="XP_001707409.1">
    <property type="nucleotide sequence ID" value="XM_001707357.1"/>
</dbReference>
<dbReference type="SMR" id="Q08014"/>
<dbReference type="GeneID" id="5700294"/>
<dbReference type="KEGG" id="gla:GL50803_0016343"/>
<dbReference type="VEuPathDB" id="GiardiaDB:DHA2_16343"/>
<dbReference type="VEuPathDB" id="GiardiaDB:GL50581_686"/>
<dbReference type="VEuPathDB" id="GiardiaDB:GL50803_0016343"/>
<dbReference type="VEuPathDB" id="GiardiaDB:QR46_1201"/>
<dbReference type="OrthoDB" id="10255522at2759"/>
<dbReference type="GO" id="GO:0005737">
    <property type="term" value="C:cytoplasm"/>
    <property type="evidence" value="ECO:0007669"/>
    <property type="project" value="UniProtKB-KW"/>
</dbReference>
<dbReference type="GO" id="GO:0097568">
    <property type="term" value="C:median body"/>
    <property type="evidence" value="ECO:0000314"/>
    <property type="project" value="UniProtKB"/>
</dbReference>
<dbReference type="GO" id="GO:0005874">
    <property type="term" value="C:microtubule"/>
    <property type="evidence" value="ECO:0007669"/>
    <property type="project" value="UniProtKB-KW"/>
</dbReference>
<dbReference type="GO" id="GO:0097591">
    <property type="term" value="C:ventral disc lateral crest"/>
    <property type="evidence" value="ECO:0000250"/>
    <property type="project" value="UniProtKB"/>
</dbReference>
<dbReference type="GO" id="GO:0097593">
    <property type="term" value="C:ventral disc microtubule array"/>
    <property type="evidence" value="ECO:0000250"/>
    <property type="project" value="UniProtKB"/>
</dbReference>
<dbReference type="GO" id="GO:0097592">
    <property type="term" value="C:ventral disc overlap zone"/>
    <property type="evidence" value="ECO:0000250"/>
    <property type="project" value="UniProtKB"/>
</dbReference>
<dbReference type="GO" id="GO:0005200">
    <property type="term" value="F:structural constituent of cytoskeleton"/>
    <property type="evidence" value="ECO:0000250"/>
    <property type="project" value="UniProtKB"/>
</dbReference>
<dbReference type="GO" id="GO:0000226">
    <property type="term" value="P:microtubule cytoskeleton organization"/>
    <property type="evidence" value="ECO:0000250"/>
    <property type="project" value="UniProtKB"/>
</dbReference>
<keyword id="KW-0175">Coiled coil</keyword>
<keyword id="KW-0963">Cytoplasm</keyword>
<keyword id="KW-0206">Cytoskeleton</keyword>
<keyword id="KW-0493">Microtubule</keyword>
<comment type="function">
    <text evidence="1 6">Structural component of the ventral disk involved in maintanance of a domed conformation of the disk required for proper attachment (By similarity). May have a role in immobilizing the microtubules between cell divisions (PubMed:8510163).</text>
</comment>
<comment type="subcellular location">
    <subcellularLocation>
        <location evidence="3">Cytoplasm</location>
        <location evidence="3">Cytoskeleton</location>
    </subcellularLocation>
    <text evidence="1 3">Localizes primarily to the overlap zone of the ventral disk microtubules, the disk edges and the plus ends of the disk microtubule spiral array (By similarity). Localizes throughout the spiral of the ventral disk and to the lateral crest surrounding the ventral disk (By similarity). Median body (PubMed:8510163). Localizes intermittently to the median body mainly in prophase (By similarity). Does not localize to the microribbons or cross bridges of the ventral disk (By similarity).</text>
</comment>
<comment type="domain">
    <text evidence="3">Shows an alpha-helical coiled coil structure (30 repeating heptads).</text>
</comment>
<protein>
    <recommendedName>
        <fullName evidence="4">Median body protein</fullName>
        <shortName evidence="5">MBP</shortName>
    </recommendedName>
    <alternativeName>
        <fullName evidence="5">MB protein</fullName>
    </alternativeName>
</protein>